<keyword id="KW-0479">Metal-binding</keyword>
<keyword id="KW-1185">Reference proteome</keyword>
<evidence type="ECO:0000255" key="1">
    <source>
        <dbReference type="PROSITE-ProRule" id="PRU00280"/>
    </source>
</evidence>
<proteinExistence type="evidence at protein level"/>
<gene>
    <name type="ordered locus">HI_0291</name>
</gene>
<organism>
    <name type="scientific">Haemophilus influenzae (strain ATCC 51907 / DSM 11121 / KW20 / Rd)</name>
    <dbReference type="NCBI Taxonomy" id="71421"/>
    <lineage>
        <taxon>Bacteria</taxon>
        <taxon>Pseudomonadati</taxon>
        <taxon>Pseudomonadota</taxon>
        <taxon>Gammaproteobacteria</taxon>
        <taxon>Pasteurellales</taxon>
        <taxon>Pasteurellaceae</taxon>
        <taxon>Haemophilus</taxon>
    </lineage>
</organism>
<reference key="1">
    <citation type="journal article" date="1995" name="Science">
        <title>Whole-genome random sequencing and assembly of Haemophilus influenzae Rd.</title>
        <authorList>
            <person name="Fleischmann R.D."/>
            <person name="Adams M.D."/>
            <person name="White O."/>
            <person name="Clayton R.A."/>
            <person name="Kirkness E.F."/>
            <person name="Kerlavage A.R."/>
            <person name="Bult C.J."/>
            <person name="Tomb J.-F."/>
            <person name="Dougherty B.A."/>
            <person name="Merrick J.M."/>
            <person name="McKenney K."/>
            <person name="Sutton G.G."/>
            <person name="FitzHugh W."/>
            <person name="Fields C.A."/>
            <person name="Gocayne J.D."/>
            <person name="Scott J.D."/>
            <person name="Shirley R."/>
            <person name="Liu L.-I."/>
            <person name="Glodek A."/>
            <person name="Kelley J.M."/>
            <person name="Weidman J.F."/>
            <person name="Phillips C.A."/>
            <person name="Spriggs T."/>
            <person name="Hedblom E."/>
            <person name="Cotton M.D."/>
            <person name="Utterback T.R."/>
            <person name="Hanna M.C."/>
            <person name="Nguyen D.T."/>
            <person name="Saudek D.M."/>
            <person name="Brandon R.C."/>
            <person name="Fine L.D."/>
            <person name="Fritchman J.L."/>
            <person name="Fuhrmann J.L."/>
            <person name="Geoghagen N.S.M."/>
            <person name="Gnehm C.L."/>
            <person name="McDonald L.A."/>
            <person name="Small K.V."/>
            <person name="Fraser C.M."/>
            <person name="Smith H.O."/>
            <person name="Venter J.C."/>
        </authorList>
    </citation>
    <scope>NUCLEOTIDE SEQUENCE [LARGE SCALE GENOMIC DNA]</scope>
    <source>
        <strain>ATCC 51907 / DSM 11121 / KW20 / Rd</strain>
    </source>
</reference>
<reference key="2">
    <citation type="submission" date="1996-09" db="EMBL/GenBank/DDBJ databases">
        <authorList>
            <person name="White O."/>
            <person name="Clayton R.A."/>
            <person name="Kerlavage A.R."/>
            <person name="Fleischmann R.D."/>
        </authorList>
    </citation>
    <scope>SEQUENCE REVISION</scope>
</reference>
<reference key="3">
    <citation type="journal article" date="2000" name="Electrophoresis">
        <title>Two-dimensional map of the proteome of Haemophilus influenzae.</title>
        <authorList>
            <person name="Langen H."/>
            <person name="Takacs B."/>
            <person name="Evers S."/>
            <person name="Berndt P."/>
            <person name="Lahm H.W."/>
            <person name="Wipf B."/>
            <person name="Gray C."/>
            <person name="Fountoulakis M."/>
        </authorList>
    </citation>
    <scope>IDENTIFICATION BY MASS SPECTROMETRY</scope>
    <source>
        <strain>ATCC 51907 / DSM 11121 / KW20 / Rd</strain>
    </source>
</reference>
<protein>
    <recommendedName>
        <fullName>Uncharacterized protein HI_0291</fullName>
    </recommendedName>
</protein>
<accession>P43979</accession>
<accession>Q57196</accession>
<feature type="chain" id="PRO_0000077906" description="Uncharacterized protein HI_0291">
    <location>
        <begin position="1"/>
        <end position="68"/>
    </location>
</feature>
<feature type="domain" description="HMA" evidence="1">
    <location>
        <begin position="2"/>
        <end position="67"/>
    </location>
</feature>
<feature type="binding site" evidence="1">
    <location>
        <position position="13"/>
    </location>
    <ligand>
        <name>a metal cation</name>
        <dbReference type="ChEBI" id="CHEBI:25213"/>
    </ligand>
</feature>
<feature type="binding site" evidence="1">
    <location>
        <position position="16"/>
    </location>
    <ligand>
        <name>a metal cation</name>
        <dbReference type="ChEBI" id="CHEBI:25213"/>
    </ligand>
</feature>
<name>Y291_HAEIN</name>
<sequence length="68" mass="7378">MKTITLNIKGIHCGCCVKNLTQVLTELDGVQSADVQLEGKANITFDENRVNVAQLIEVIEDAGFDATE</sequence>
<dbReference type="EMBL" id="L42023">
    <property type="protein sequence ID" value="AAC21964.1"/>
    <property type="molecule type" value="Genomic_DNA"/>
</dbReference>
<dbReference type="PIR" id="F64005">
    <property type="entry name" value="F64005"/>
</dbReference>
<dbReference type="RefSeq" id="NP_438458.1">
    <property type="nucleotide sequence ID" value="NC_000907.1"/>
</dbReference>
<dbReference type="SMR" id="P43979"/>
<dbReference type="STRING" id="71421.HI_0291"/>
<dbReference type="EnsemblBacteria" id="AAC21964">
    <property type="protein sequence ID" value="AAC21964"/>
    <property type="gene ID" value="HI_0291"/>
</dbReference>
<dbReference type="KEGG" id="hin:HI_0291"/>
<dbReference type="PATRIC" id="fig|71421.8.peg.307"/>
<dbReference type="eggNOG" id="COG2608">
    <property type="taxonomic scope" value="Bacteria"/>
</dbReference>
<dbReference type="HOGENOM" id="CLU_134973_10_3_6"/>
<dbReference type="OrthoDB" id="9814359at2"/>
<dbReference type="PhylomeDB" id="P43979"/>
<dbReference type="BioCyc" id="HINF71421:G1GJ1-309-MONOMER"/>
<dbReference type="Proteomes" id="UP000000579">
    <property type="component" value="Chromosome"/>
</dbReference>
<dbReference type="GO" id="GO:0046872">
    <property type="term" value="F:metal ion binding"/>
    <property type="evidence" value="ECO:0007669"/>
    <property type="project" value="UniProtKB-KW"/>
</dbReference>
<dbReference type="CDD" id="cd00371">
    <property type="entry name" value="HMA"/>
    <property type="match status" value="1"/>
</dbReference>
<dbReference type="FunFam" id="3.30.70.100:FF:000001">
    <property type="entry name" value="ATPase copper transporting beta"/>
    <property type="match status" value="1"/>
</dbReference>
<dbReference type="Gene3D" id="3.30.70.100">
    <property type="match status" value="1"/>
</dbReference>
<dbReference type="InterPro" id="IPR017969">
    <property type="entry name" value="Heavy-metal-associated_CS"/>
</dbReference>
<dbReference type="InterPro" id="IPR006121">
    <property type="entry name" value="HMA_dom"/>
</dbReference>
<dbReference type="InterPro" id="IPR036163">
    <property type="entry name" value="HMA_dom_sf"/>
</dbReference>
<dbReference type="PANTHER" id="PTHR46594">
    <property type="entry name" value="P-TYPE CATION-TRANSPORTING ATPASE"/>
    <property type="match status" value="1"/>
</dbReference>
<dbReference type="PANTHER" id="PTHR46594:SF4">
    <property type="entry name" value="P-TYPE CATION-TRANSPORTING ATPASE"/>
    <property type="match status" value="1"/>
</dbReference>
<dbReference type="Pfam" id="PF00403">
    <property type="entry name" value="HMA"/>
    <property type="match status" value="1"/>
</dbReference>
<dbReference type="SUPFAM" id="SSF55008">
    <property type="entry name" value="HMA, heavy metal-associated domain"/>
    <property type="match status" value="1"/>
</dbReference>
<dbReference type="PROSITE" id="PS01047">
    <property type="entry name" value="HMA_1"/>
    <property type="match status" value="1"/>
</dbReference>
<dbReference type="PROSITE" id="PS50846">
    <property type="entry name" value="HMA_2"/>
    <property type="match status" value="1"/>
</dbReference>